<comment type="function">
    <text evidence="1">Required for disulfide bond formation in some periplasmic proteins. Acts by oxidizing the DsbA protein.</text>
</comment>
<comment type="subcellular location">
    <subcellularLocation>
        <location evidence="1">Cell inner membrane</location>
        <topology evidence="1">Multi-pass membrane protein</topology>
    </subcellularLocation>
</comment>
<comment type="similarity">
    <text evidence="1">Belongs to the DsbB family.</text>
</comment>
<accession>Q46ZY7</accession>
<keyword id="KW-0997">Cell inner membrane</keyword>
<keyword id="KW-1003">Cell membrane</keyword>
<keyword id="KW-0143">Chaperone</keyword>
<keyword id="KW-1015">Disulfide bond</keyword>
<keyword id="KW-0249">Electron transport</keyword>
<keyword id="KW-0472">Membrane</keyword>
<keyword id="KW-0560">Oxidoreductase</keyword>
<keyword id="KW-0676">Redox-active center</keyword>
<keyword id="KW-0812">Transmembrane</keyword>
<keyword id="KW-1133">Transmembrane helix</keyword>
<keyword id="KW-0813">Transport</keyword>
<name>DSBB_CUPPJ</name>
<gene>
    <name evidence="1" type="primary">dsbB</name>
    <name type="ordered locus">Reut_A1931</name>
</gene>
<protein>
    <recommendedName>
        <fullName evidence="1">Disulfide bond formation protein B</fullName>
    </recommendedName>
    <alternativeName>
        <fullName evidence="1">Disulfide oxidoreductase</fullName>
    </alternativeName>
</protein>
<reference key="1">
    <citation type="journal article" date="2010" name="PLoS ONE">
        <title>The complete multipartite genome sequence of Cupriavidus necator JMP134, a versatile pollutant degrader.</title>
        <authorList>
            <person name="Lykidis A."/>
            <person name="Perez-Pantoja D."/>
            <person name="Ledger T."/>
            <person name="Mavromatis K."/>
            <person name="Anderson I.J."/>
            <person name="Ivanova N.N."/>
            <person name="Hooper S.D."/>
            <person name="Lapidus A."/>
            <person name="Lucas S."/>
            <person name="Gonzalez B."/>
            <person name="Kyrpides N.C."/>
        </authorList>
    </citation>
    <scope>NUCLEOTIDE SEQUENCE [LARGE SCALE GENOMIC DNA]</scope>
    <source>
        <strain>JMP134 / LMG 1197</strain>
    </source>
</reference>
<feature type="chain" id="PRO_0000298400" description="Disulfide bond formation protein B">
    <location>
        <begin position="1"/>
        <end position="161"/>
    </location>
</feature>
<feature type="topological domain" description="Cytoplasmic" evidence="1">
    <location>
        <begin position="1"/>
        <end position="8"/>
    </location>
</feature>
<feature type="transmembrane region" description="Helical" evidence="1">
    <location>
        <begin position="9"/>
        <end position="25"/>
    </location>
</feature>
<feature type="topological domain" description="Periplasmic" evidence="1">
    <location>
        <begin position="26"/>
        <end position="43"/>
    </location>
</feature>
<feature type="transmembrane region" description="Helical" evidence="1">
    <location>
        <begin position="44"/>
        <end position="58"/>
    </location>
</feature>
<feature type="topological domain" description="Cytoplasmic" evidence="1">
    <location>
        <begin position="59"/>
        <end position="63"/>
    </location>
</feature>
<feature type="transmembrane region" description="Helical" evidence="1">
    <location>
        <begin position="64"/>
        <end position="81"/>
    </location>
</feature>
<feature type="topological domain" description="Periplasmic" evidence="1">
    <location>
        <begin position="82"/>
        <end position="136"/>
    </location>
</feature>
<feature type="transmembrane region" description="Helical" evidence="1">
    <location>
        <begin position="137"/>
        <end position="155"/>
    </location>
</feature>
<feature type="topological domain" description="Cytoplasmic" evidence="1">
    <location>
        <begin position="156"/>
        <end position="161"/>
    </location>
</feature>
<feature type="disulfide bond" description="Redox-active" evidence="1">
    <location>
        <begin position="35"/>
        <end position="38"/>
    </location>
</feature>
<feature type="disulfide bond" description="Redox-active" evidence="1">
    <location>
        <begin position="94"/>
        <end position="122"/>
    </location>
</feature>
<proteinExistence type="inferred from homology"/>
<organism>
    <name type="scientific">Cupriavidus pinatubonensis (strain JMP 134 / LMG 1197)</name>
    <name type="common">Cupriavidus necator (strain JMP 134)</name>
    <dbReference type="NCBI Taxonomy" id="264198"/>
    <lineage>
        <taxon>Bacteria</taxon>
        <taxon>Pseudomonadati</taxon>
        <taxon>Pseudomonadota</taxon>
        <taxon>Betaproteobacteria</taxon>
        <taxon>Burkholderiales</taxon>
        <taxon>Burkholderiaceae</taxon>
        <taxon>Cupriavidus</taxon>
    </lineage>
</organism>
<sequence length="161" mass="17605">MQANSRAYFLLIAFISFGLVGFALYLQFEKGYQPCPLCIMQRFAFIGIGLFSLLAVIAQNTRSLWQGLGMLSGVGGIAVAVYHVSLLLNPKASCGIDPLENWVNALPTAKVLPQVFYSDGLCTAPLPPVLGLSVPAWSLIWLFILTLTLAVGLIRREKNFR</sequence>
<evidence type="ECO:0000255" key="1">
    <source>
        <dbReference type="HAMAP-Rule" id="MF_00286"/>
    </source>
</evidence>
<dbReference type="EMBL" id="CP000090">
    <property type="protein sequence ID" value="AAZ61296.1"/>
    <property type="molecule type" value="Genomic_DNA"/>
</dbReference>
<dbReference type="SMR" id="Q46ZY7"/>
<dbReference type="STRING" id="264198.Reut_A1931"/>
<dbReference type="KEGG" id="reu:Reut_A1931"/>
<dbReference type="eggNOG" id="COG1495">
    <property type="taxonomic scope" value="Bacteria"/>
</dbReference>
<dbReference type="HOGENOM" id="CLU_098660_1_0_4"/>
<dbReference type="OrthoDB" id="3711263at2"/>
<dbReference type="GO" id="GO:0005886">
    <property type="term" value="C:plasma membrane"/>
    <property type="evidence" value="ECO:0007669"/>
    <property type="project" value="UniProtKB-SubCell"/>
</dbReference>
<dbReference type="GO" id="GO:0009055">
    <property type="term" value="F:electron transfer activity"/>
    <property type="evidence" value="ECO:0007669"/>
    <property type="project" value="UniProtKB-UniRule"/>
</dbReference>
<dbReference type="GO" id="GO:0015035">
    <property type="term" value="F:protein-disulfide reductase activity"/>
    <property type="evidence" value="ECO:0007669"/>
    <property type="project" value="UniProtKB-UniRule"/>
</dbReference>
<dbReference type="GO" id="GO:0006457">
    <property type="term" value="P:protein folding"/>
    <property type="evidence" value="ECO:0007669"/>
    <property type="project" value="InterPro"/>
</dbReference>
<dbReference type="Gene3D" id="1.20.1550.10">
    <property type="entry name" value="DsbB-like"/>
    <property type="match status" value="1"/>
</dbReference>
<dbReference type="HAMAP" id="MF_00286">
    <property type="entry name" value="DsbB"/>
    <property type="match status" value="1"/>
</dbReference>
<dbReference type="InterPro" id="IPR003752">
    <property type="entry name" value="DiS_bond_form_DsbB/BdbC"/>
</dbReference>
<dbReference type="InterPro" id="IPR022920">
    <property type="entry name" value="Disulphide_bond_form_DsbB"/>
</dbReference>
<dbReference type="InterPro" id="IPR050183">
    <property type="entry name" value="DsbB"/>
</dbReference>
<dbReference type="InterPro" id="IPR023380">
    <property type="entry name" value="DsbB-like_sf"/>
</dbReference>
<dbReference type="NCBIfam" id="NF002552">
    <property type="entry name" value="PRK02110.1"/>
    <property type="match status" value="1"/>
</dbReference>
<dbReference type="PANTHER" id="PTHR36570">
    <property type="entry name" value="DISULFIDE BOND FORMATION PROTEIN B"/>
    <property type="match status" value="1"/>
</dbReference>
<dbReference type="PANTHER" id="PTHR36570:SF3">
    <property type="entry name" value="DISULFIDE BOND FORMATION PROTEIN B"/>
    <property type="match status" value="1"/>
</dbReference>
<dbReference type="Pfam" id="PF02600">
    <property type="entry name" value="DsbB"/>
    <property type="match status" value="1"/>
</dbReference>
<dbReference type="SUPFAM" id="SSF158442">
    <property type="entry name" value="DsbB-like"/>
    <property type="match status" value="1"/>
</dbReference>